<comment type="function">
    <text evidence="1">Heme chaperone required for the biogenesis of c-type cytochromes. Transiently binds heme delivered by CcmC and transfers the heme to apo-cytochromes in a process facilitated by CcmF and CcmH.</text>
</comment>
<comment type="subcellular location">
    <subcellularLocation>
        <location evidence="1">Cell inner membrane</location>
        <topology evidence="1">Single-pass type II membrane protein</topology>
        <orientation evidence="1">Periplasmic side</orientation>
    </subcellularLocation>
</comment>
<comment type="similarity">
    <text evidence="1">Belongs to the CcmE/CycJ family.</text>
</comment>
<evidence type="ECO:0000255" key="1">
    <source>
        <dbReference type="HAMAP-Rule" id="MF_01959"/>
    </source>
</evidence>
<name>CCME1_XANOM</name>
<reference key="1">
    <citation type="journal article" date="2005" name="Jpn. Agric. Res. Q.">
        <title>Genome sequence of Xanthomonas oryzae pv. oryzae suggests contribution of large numbers of effector genes and insertion sequences to its race diversity.</title>
        <authorList>
            <person name="Ochiai H."/>
            <person name="Inoue Y."/>
            <person name="Takeya M."/>
            <person name="Sasaki A."/>
            <person name="Kaku H."/>
        </authorList>
    </citation>
    <scope>NUCLEOTIDE SEQUENCE [LARGE SCALE GENOMIC DNA]</scope>
    <source>
        <strain>MAFF 311018</strain>
    </source>
</reference>
<accession>Q2P1G3</accession>
<dbReference type="EMBL" id="AP008229">
    <property type="protein sequence ID" value="BAE69614.1"/>
    <property type="molecule type" value="Genomic_DNA"/>
</dbReference>
<dbReference type="SMR" id="Q2P1G3"/>
<dbReference type="KEGG" id="xom:XOO2859"/>
<dbReference type="HOGENOM" id="CLU_079503_1_1_6"/>
<dbReference type="GO" id="GO:0005886">
    <property type="term" value="C:plasma membrane"/>
    <property type="evidence" value="ECO:0007669"/>
    <property type="project" value="UniProtKB-SubCell"/>
</dbReference>
<dbReference type="GO" id="GO:0020037">
    <property type="term" value="F:heme binding"/>
    <property type="evidence" value="ECO:0007669"/>
    <property type="project" value="InterPro"/>
</dbReference>
<dbReference type="GO" id="GO:0046872">
    <property type="term" value="F:metal ion binding"/>
    <property type="evidence" value="ECO:0007669"/>
    <property type="project" value="UniProtKB-KW"/>
</dbReference>
<dbReference type="GO" id="GO:0017004">
    <property type="term" value="P:cytochrome complex assembly"/>
    <property type="evidence" value="ECO:0007669"/>
    <property type="project" value="UniProtKB-KW"/>
</dbReference>
<dbReference type="FunFam" id="2.40.50.140:FF:000104">
    <property type="entry name" value="Cytochrome c-type biogenesis protein CcmE"/>
    <property type="match status" value="1"/>
</dbReference>
<dbReference type="Gene3D" id="2.40.50.140">
    <property type="entry name" value="Nucleic acid-binding proteins"/>
    <property type="match status" value="1"/>
</dbReference>
<dbReference type="HAMAP" id="MF_01959">
    <property type="entry name" value="CcmE"/>
    <property type="match status" value="1"/>
</dbReference>
<dbReference type="InterPro" id="IPR004329">
    <property type="entry name" value="CcmE"/>
</dbReference>
<dbReference type="InterPro" id="IPR036127">
    <property type="entry name" value="CcmE-like_sf"/>
</dbReference>
<dbReference type="InterPro" id="IPR012340">
    <property type="entry name" value="NA-bd_OB-fold"/>
</dbReference>
<dbReference type="NCBIfam" id="NF009637">
    <property type="entry name" value="PRK13159.1"/>
    <property type="match status" value="1"/>
</dbReference>
<dbReference type="NCBIfam" id="NF009727">
    <property type="entry name" value="PRK13254.1-1"/>
    <property type="match status" value="1"/>
</dbReference>
<dbReference type="NCBIfam" id="NF009729">
    <property type="entry name" value="PRK13254.1-3"/>
    <property type="match status" value="1"/>
</dbReference>
<dbReference type="NCBIfam" id="NF009731">
    <property type="entry name" value="PRK13254.1-5"/>
    <property type="match status" value="1"/>
</dbReference>
<dbReference type="PANTHER" id="PTHR34128">
    <property type="entry name" value="CYTOCHROME C-TYPE BIOGENESIS PROTEIN CCME HOMOLOG, MITOCHONDRIAL"/>
    <property type="match status" value="1"/>
</dbReference>
<dbReference type="PANTHER" id="PTHR34128:SF2">
    <property type="entry name" value="CYTOCHROME C-TYPE BIOGENESIS PROTEIN CCME HOMOLOG, MITOCHONDRIAL"/>
    <property type="match status" value="1"/>
</dbReference>
<dbReference type="Pfam" id="PF03100">
    <property type="entry name" value="CcmE"/>
    <property type="match status" value="1"/>
</dbReference>
<dbReference type="SUPFAM" id="SSF82093">
    <property type="entry name" value="Heme chaperone CcmE"/>
    <property type="match status" value="1"/>
</dbReference>
<gene>
    <name evidence="1" type="primary">ccmE1</name>
    <name evidence="1" type="synonym">cycJ1</name>
    <name type="ordered locus">XOO2859</name>
</gene>
<protein>
    <recommendedName>
        <fullName evidence="1">Cytochrome c-type biogenesis protein CcmE 1</fullName>
    </recommendedName>
    <alternativeName>
        <fullName evidence="1">Cytochrome c maturation protein E 1</fullName>
    </alternativeName>
    <alternativeName>
        <fullName evidence="1">Heme chaperone CcmE 1</fullName>
    </alternativeName>
</protein>
<organism>
    <name type="scientific">Xanthomonas oryzae pv. oryzae (strain MAFF 311018)</name>
    <dbReference type="NCBI Taxonomy" id="342109"/>
    <lineage>
        <taxon>Bacteria</taxon>
        <taxon>Pseudomonadati</taxon>
        <taxon>Pseudomonadota</taxon>
        <taxon>Gammaproteobacteria</taxon>
        <taxon>Lysobacterales</taxon>
        <taxon>Lysobacteraceae</taxon>
        <taxon>Xanthomonas</taxon>
    </lineage>
</organism>
<keyword id="KW-0997">Cell inner membrane</keyword>
<keyword id="KW-1003">Cell membrane</keyword>
<keyword id="KW-0201">Cytochrome c-type biogenesis</keyword>
<keyword id="KW-0349">Heme</keyword>
<keyword id="KW-0408">Iron</keyword>
<keyword id="KW-0472">Membrane</keyword>
<keyword id="KW-0479">Metal-binding</keyword>
<keyword id="KW-0735">Signal-anchor</keyword>
<keyword id="KW-0812">Transmembrane</keyword>
<keyword id="KW-1133">Transmembrane helix</keyword>
<sequence length="156" mass="16731">MNATRKQRLCLVIGVLAAAALAVTLIVFALQRNMSYLFTPSQVRAGAAAGYQQFRLGGMVKAGSIQRAADSLKVSFTVIDKNAATPVEYTGILPDLFRDNQSVIANGRMQGGRFVANEVLAKHDETYMPKELKDAMAEGHLGKPIPATAAPLTTPR</sequence>
<proteinExistence type="inferred from homology"/>
<feature type="chain" id="PRO_0000238889" description="Cytochrome c-type biogenesis protein CcmE 1">
    <location>
        <begin position="1"/>
        <end position="156"/>
    </location>
</feature>
<feature type="topological domain" description="Cytoplasmic" evidence="1">
    <location>
        <begin position="1"/>
        <end position="8"/>
    </location>
</feature>
<feature type="transmembrane region" description="Helical; Signal-anchor for type II membrane protein" evidence="1">
    <location>
        <begin position="9"/>
        <end position="29"/>
    </location>
</feature>
<feature type="topological domain" description="Periplasmic" evidence="1">
    <location>
        <begin position="30"/>
        <end position="156"/>
    </location>
</feature>
<feature type="binding site" description="covalent" evidence="1">
    <location>
        <position position="123"/>
    </location>
    <ligand>
        <name>heme</name>
        <dbReference type="ChEBI" id="CHEBI:30413"/>
    </ligand>
</feature>
<feature type="binding site" description="axial binding residue" evidence="1">
    <location>
        <position position="127"/>
    </location>
    <ligand>
        <name>heme</name>
        <dbReference type="ChEBI" id="CHEBI:30413"/>
    </ligand>
    <ligandPart>
        <name>Fe</name>
        <dbReference type="ChEBI" id="CHEBI:18248"/>
    </ligandPart>
</feature>